<accession>Q6G8C4</accession>
<protein>
    <recommendedName>
        <fullName>Serine protease SplF</fullName>
        <ecNumber>3.4.21.-</ecNumber>
    </recommendedName>
</protein>
<name>SPLF_STAAS</name>
<sequence>MNKNIIIKSIAALTILTSITGVGTTVVDGIQQTAKAENTVKQITNTNVAPYSGVTWMGAGTGFVVGNHTIITNKHVTYHMKVGDEIKAHPNGFYNNGGGLYKVTKIVDYPGKEDIAVVQVEEKSTQPKGRKFKDFTSKFNIASEAKENEPISVIGYPNPNGNKLQMYESTGKVLSVNGNIVSSDAIIQPGSSGSPILNSKHEAIGVIYAGNKPSGESTRGFAVYFSPEIKKFIADNLDK</sequence>
<keyword id="KW-0378">Hydrolase</keyword>
<keyword id="KW-0645">Protease</keyword>
<keyword id="KW-0964">Secreted</keyword>
<keyword id="KW-0720">Serine protease</keyword>
<keyword id="KW-0732">Signal</keyword>
<organism>
    <name type="scientific">Staphylococcus aureus (strain MSSA476)</name>
    <dbReference type="NCBI Taxonomy" id="282459"/>
    <lineage>
        <taxon>Bacteria</taxon>
        <taxon>Bacillati</taxon>
        <taxon>Bacillota</taxon>
        <taxon>Bacilli</taxon>
        <taxon>Bacillales</taxon>
        <taxon>Staphylococcaceae</taxon>
        <taxon>Staphylococcus</taxon>
    </lineage>
</organism>
<proteinExistence type="inferred from homology"/>
<evidence type="ECO:0000250" key="1"/>
<evidence type="ECO:0000305" key="2"/>
<reference key="1">
    <citation type="journal article" date="2004" name="Proc. Natl. Acad. Sci. U.S.A.">
        <title>Complete genomes of two clinical Staphylococcus aureus strains: evidence for the rapid evolution of virulence and drug resistance.</title>
        <authorList>
            <person name="Holden M.T.G."/>
            <person name="Feil E.J."/>
            <person name="Lindsay J.A."/>
            <person name="Peacock S.J."/>
            <person name="Day N.P.J."/>
            <person name="Enright M.C."/>
            <person name="Foster T.J."/>
            <person name="Moore C.E."/>
            <person name="Hurst L."/>
            <person name="Atkin R."/>
            <person name="Barron A."/>
            <person name="Bason N."/>
            <person name="Bentley S.D."/>
            <person name="Chillingworth C."/>
            <person name="Chillingworth T."/>
            <person name="Churcher C."/>
            <person name="Clark L."/>
            <person name="Corton C."/>
            <person name="Cronin A."/>
            <person name="Doggett J."/>
            <person name="Dowd L."/>
            <person name="Feltwell T."/>
            <person name="Hance Z."/>
            <person name="Harris B."/>
            <person name="Hauser H."/>
            <person name="Holroyd S."/>
            <person name="Jagels K."/>
            <person name="James K.D."/>
            <person name="Lennard N."/>
            <person name="Line A."/>
            <person name="Mayes R."/>
            <person name="Moule S."/>
            <person name="Mungall K."/>
            <person name="Ormond D."/>
            <person name="Quail M.A."/>
            <person name="Rabbinowitsch E."/>
            <person name="Rutherford K.M."/>
            <person name="Sanders M."/>
            <person name="Sharp S."/>
            <person name="Simmonds M."/>
            <person name="Stevens K."/>
            <person name="Whitehead S."/>
            <person name="Barrell B.G."/>
            <person name="Spratt B.G."/>
            <person name="Parkhill J."/>
        </authorList>
    </citation>
    <scope>NUCLEOTIDE SEQUENCE [LARGE SCALE GENOMIC DNA]</scope>
    <source>
        <strain>MSSA476</strain>
    </source>
</reference>
<feature type="signal peptide" evidence="1">
    <location>
        <begin position="1"/>
        <end position="36"/>
    </location>
</feature>
<feature type="chain" id="PRO_0000359580" description="Serine protease SplF">
    <location>
        <begin position="37"/>
        <end position="239"/>
    </location>
</feature>
<feature type="active site" description="Charge relay system" evidence="1">
    <location>
        <position position="75"/>
    </location>
</feature>
<feature type="active site" description="Charge relay system" evidence="1">
    <location>
        <position position="114"/>
    </location>
</feature>
<feature type="active site" description="Charge relay system" evidence="1">
    <location>
        <position position="192"/>
    </location>
</feature>
<dbReference type="EC" id="3.4.21.-"/>
<dbReference type="EMBL" id="BX571857">
    <property type="protein sequence ID" value="CAG43537.1"/>
    <property type="molecule type" value="Genomic_DNA"/>
</dbReference>
<dbReference type="RefSeq" id="WP_001038709.1">
    <property type="nucleotide sequence ID" value="NC_002953.3"/>
</dbReference>
<dbReference type="SMR" id="Q6G8C4"/>
<dbReference type="MEROPS" id="S01.526"/>
<dbReference type="KEGG" id="sas:SAS1733"/>
<dbReference type="HOGENOM" id="CLU_073589_2_0_9"/>
<dbReference type="GO" id="GO:0005576">
    <property type="term" value="C:extracellular region"/>
    <property type="evidence" value="ECO:0007669"/>
    <property type="project" value="UniProtKB-SubCell"/>
</dbReference>
<dbReference type="GO" id="GO:0008236">
    <property type="term" value="F:serine-type peptidase activity"/>
    <property type="evidence" value="ECO:0007669"/>
    <property type="project" value="UniProtKB-KW"/>
</dbReference>
<dbReference type="GO" id="GO:0006508">
    <property type="term" value="P:proteolysis"/>
    <property type="evidence" value="ECO:0007669"/>
    <property type="project" value="UniProtKB-KW"/>
</dbReference>
<dbReference type="Gene3D" id="2.40.10.10">
    <property type="entry name" value="Trypsin-like serine proteases"/>
    <property type="match status" value="2"/>
</dbReference>
<dbReference type="InterPro" id="IPR009003">
    <property type="entry name" value="Peptidase_S1_PA"/>
</dbReference>
<dbReference type="InterPro" id="IPR043504">
    <property type="entry name" value="Peptidase_S1_PA_chymotrypsin"/>
</dbReference>
<dbReference type="InterPro" id="IPR008256">
    <property type="entry name" value="Peptidase_S1B"/>
</dbReference>
<dbReference type="InterPro" id="IPR028301">
    <property type="entry name" value="V8_his_AS"/>
</dbReference>
<dbReference type="PANTHER" id="PTHR43019:SF23">
    <property type="entry name" value="PROTEASE DO-LIKE 5, CHLOROPLASTIC"/>
    <property type="match status" value="1"/>
</dbReference>
<dbReference type="PANTHER" id="PTHR43019">
    <property type="entry name" value="SERINE ENDOPROTEASE DEGS"/>
    <property type="match status" value="1"/>
</dbReference>
<dbReference type="Pfam" id="PF13365">
    <property type="entry name" value="Trypsin_2"/>
    <property type="match status" value="1"/>
</dbReference>
<dbReference type="PRINTS" id="PR00839">
    <property type="entry name" value="V8PROTEASE"/>
</dbReference>
<dbReference type="SUPFAM" id="SSF50494">
    <property type="entry name" value="Trypsin-like serine proteases"/>
    <property type="match status" value="1"/>
</dbReference>
<dbReference type="PROSITE" id="PS00672">
    <property type="entry name" value="V8_HIS"/>
    <property type="match status" value="1"/>
</dbReference>
<comment type="subcellular location">
    <subcellularLocation>
        <location evidence="1">Secreted</location>
    </subcellularLocation>
</comment>
<comment type="similarity">
    <text evidence="2">Belongs to the peptidase S1B family.</text>
</comment>
<gene>
    <name type="primary">splF</name>
    <name type="ordered locus">SAS1733</name>
</gene>